<reference key="1">
    <citation type="journal article" date="2009" name="Genome Biol.">
        <title>Genomic and genetic analyses of diversity and plant interactions of Pseudomonas fluorescens.</title>
        <authorList>
            <person name="Silby M.W."/>
            <person name="Cerdeno-Tarraga A.M."/>
            <person name="Vernikos G.S."/>
            <person name="Giddens S.R."/>
            <person name="Jackson R.W."/>
            <person name="Preston G.M."/>
            <person name="Zhang X.-X."/>
            <person name="Moon C.D."/>
            <person name="Gehrig S.M."/>
            <person name="Godfrey S.A.C."/>
            <person name="Knight C.G."/>
            <person name="Malone J.G."/>
            <person name="Robinson Z."/>
            <person name="Spiers A.J."/>
            <person name="Harris S."/>
            <person name="Challis G.L."/>
            <person name="Yaxley A.M."/>
            <person name="Harris D."/>
            <person name="Seeger K."/>
            <person name="Murphy L."/>
            <person name="Rutter S."/>
            <person name="Squares R."/>
            <person name="Quail M.A."/>
            <person name="Saunders E."/>
            <person name="Mavromatis K."/>
            <person name="Brettin T.S."/>
            <person name="Bentley S.D."/>
            <person name="Hothersall J."/>
            <person name="Stephens E."/>
            <person name="Thomas C.M."/>
            <person name="Parkhill J."/>
            <person name="Levy S.B."/>
            <person name="Rainey P.B."/>
            <person name="Thomson N.R."/>
        </authorList>
    </citation>
    <scope>NUCLEOTIDE SEQUENCE [LARGE SCALE GENOMIC DNA]</scope>
    <source>
        <strain>Pf0-1</strain>
    </source>
</reference>
<sequence length="423" mass="48664">MSYVIDRRLNGKNKSTVNRQRFLRRYRDHIKKAVEEAVSRRSITDMEHGEQISIPGRDIDEPVLHHGRGGKQTVVHPGNKEFTAGEHIARPPGGGGGRGPGKAGNSGEGMDEFVFQITQEEFLEFMFEDLELPNLVKRNLTGTDTFKTVRAGISNEGNPSRINIIRTLRSAHARRIALSGSSRAKLREVKEELARLKREEPDNFGDIQDLEAEIERLSARIHRVPFLDTFDLKYNLLVKQPNPSSKAVMFCLMDVSGSMTQATKDIAKRFFILLYLFLKRNYDKIDVVFIRHHTSAREVDEEEFFYSRETGGTIVSSALKLMQEIMAERYPSNEWNIYAAQASDGDNWNDDSPICRDILINQIMPFVQYYTYVEITPREHQALWYEYERIAEAFSDTFAQQQLVSAGDIYPVFRELFQRRLVT</sequence>
<proteinExistence type="inferred from homology"/>
<protein>
    <recommendedName>
        <fullName evidence="1">UPF0229 protein Pfl01_5140</fullName>
    </recommendedName>
</protein>
<accession>Q3K5S7</accession>
<comment type="similarity">
    <text evidence="1">Belongs to the UPF0229 family.</text>
</comment>
<organism>
    <name type="scientific">Pseudomonas fluorescens (strain Pf0-1)</name>
    <dbReference type="NCBI Taxonomy" id="205922"/>
    <lineage>
        <taxon>Bacteria</taxon>
        <taxon>Pseudomonadati</taxon>
        <taxon>Pseudomonadota</taxon>
        <taxon>Gammaproteobacteria</taxon>
        <taxon>Pseudomonadales</taxon>
        <taxon>Pseudomonadaceae</taxon>
        <taxon>Pseudomonas</taxon>
    </lineage>
</organism>
<name>Y5140_PSEPF</name>
<gene>
    <name type="ordered locus">Pfl01_5140</name>
</gene>
<dbReference type="EMBL" id="CP000094">
    <property type="protein sequence ID" value="ABA76877.1"/>
    <property type="molecule type" value="Genomic_DNA"/>
</dbReference>
<dbReference type="RefSeq" id="WP_011336212.1">
    <property type="nucleotide sequence ID" value="NC_007492.2"/>
</dbReference>
<dbReference type="SMR" id="Q3K5S7"/>
<dbReference type="KEGG" id="pfo:Pfl01_5140"/>
<dbReference type="eggNOG" id="COG2718">
    <property type="taxonomic scope" value="Bacteria"/>
</dbReference>
<dbReference type="HOGENOM" id="CLU_049702_0_0_6"/>
<dbReference type="Proteomes" id="UP000002704">
    <property type="component" value="Chromosome"/>
</dbReference>
<dbReference type="HAMAP" id="MF_01232">
    <property type="entry name" value="UPF0229"/>
    <property type="match status" value="1"/>
</dbReference>
<dbReference type="InterPro" id="IPR006698">
    <property type="entry name" value="UPF0229"/>
</dbReference>
<dbReference type="InterPro" id="IPR036465">
    <property type="entry name" value="vWFA_dom_sf"/>
</dbReference>
<dbReference type="NCBIfam" id="NF003707">
    <property type="entry name" value="PRK05325.1-2"/>
    <property type="match status" value="1"/>
</dbReference>
<dbReference type="NCBIfam" id="NF003708">
    <property type="entry name" value="PRK05325.1-3"/>
    <property type="match status" value="1"/>
</dbReference>
<dbReference type="PANTHER" id="PTHR30510">
    <property type="entry name" value="UPF0229 PROTEIN YEAH"/>
    <property type="match status" value="1"/>
</dbReference>
<dbReference type="PANTHER" id="PTHR30510:SF2">
    <property type="entry name" value="UPF0229 PROTEIN YEAH"/>
    <property type="match status" value="1"/>
</dbReference>
<dbReference type="Pfam" id="PF04285">
    <property type="entry name" value="DUF444"/>
    <property type="match status" value="1"/>
</dbReference>
<dbReference type="SUPFAM" id="SSF53300">
    <property type="entry name" value="vWA-like"/>
    <property type="match status" value="1"/>
</dbReference>
<feature type="chain" id="PRO_1000066874" description="UPF0229 protein Pfl01_5140">
    <location>
        <begin position="1"/>
        <end position="423"/>
    </location>
</feature>
<feature type="region of interest" description="Disordered" evidence="2">
    <location>
        <begin position="83"/>
        <end position="108"/>
    </location>
</feature>
<feature type="compositionally biased region" description="Gly residues" evidence="2">
    <location>
        <begin position="92"/>
        <end position="107"/>
    </location>
</feature>
<evidence type="ECO:0000255" key="1">
    <source>
        <dbReference type="HAMAP-Rule" id="MF_01232"/>
    </source>
</evidence>
<evidence type="ECO:0000256" key="2">
    <source>
        <dbReference type="SAM" id="MobiDB-lite"/>
    </source>
</evidence>